<comment type="function">
    <text evidence="1">Involved in phosphonate degradation.</text>
</comment>
<comment type="catalytic activity">
    <reaction evidence="1">
        <text>phosphonoacetaldehyde + H2O = acetaldehyde + phosphate + H(+)</text>
        <dbReference type="Rhea" id="RHEA:18905"/>
        <dbReference type="ChEBI" id="CHEBI:15343"/>
        <dbReference type="ChEBI" id="CHEBI:15377"/>
        <dbReference type="ChEBI" id="CHEBI:15378"/>
        <dbReference type="ChEBI" id="CHEBI:43474"/>
        <dbReference type="ChEBI" id="CHEBI:58383"/>
        <dbReference type="EC" id="3.11.1.1"/>
    </reaction>
</comment>
<comment type="cofactor">
    <cofactor evidence="1">
        <name>Mg(2+)</name>
        <dbReference type="ChEBI" id="CHEBI:18420"/>
    </cofactor>
    <text evidence="1">Binds 1 Mg(2+) ion per subunit.</text>
</comment>
<comment type="subunit">
    <text evidence="1">Homodimer.</text>
</comment>
<comment type="similarity">
    <text evidence="1">Belongs to the HAD-like hydrolase superfamily. PhnX family.</text>
</comment>
<reference key="1">
    <citation type="journal article" date="2008" name="BMC Genomics">
        <title>The genome sequence of the fish pathogen Aliivibrio salmonicida strain LFI1238 shows extensive evidence of gene decay.</title>
        <authorList>
            <person name="Hjerde E."/>
            <person name="Lorentzen M.S."/>
            <person name="Holden M.T."/>
            <person name="Seeger K."/>
            <person name="Paulsen S."/>
            <person name="Bason N."/>
            <person name="Churcher C."/>
            <person name="Harris D."/>
            <person name="Norbertczak H."/>
            <person name="Quail M.A."/>
            <person name="Sanders S."/>
            <person name="Thurston S."/>
            <person name="Parkhill J."/>
            <person name="Willassen N.P."/>
            <person name="Thomson N.R."/>
        </authorList>
    </citation>
    <scope>NUCLEOTIDE SEQUENCE [LARGE SCALE GENOMIC DNA]</scope>
    <source>
        <strain>LFI1238</strain>
    </source>
</reference>
<name>PHNX_ALISL</name>
<dbReference type="EC" id="3.11.1.1" evidence="1"/>
<dbReference type="EMBL" id="FM178380">
    <property type="protein sequence ID" value="CAQ81568.1"/>
    <property type="molecule type" value="Genomic_DNA"/>
</dbReference>
<dbReference type="SMR" id="B6ES82"/>
<dbReference type="KEGG" id="vsa:VSAL_II0814"/>
<dbReference type="eggNOG" id="COG0637">
    <property type="taxonomic scope" value="Bacteria"/>
</dbReference>
<dbReference type="HOGENOM" id="CLU_045011_12_0_6"/>
<dbReference type="Proteomes" id="UP000001730">
    <property type="component" value="Chromosome 2"/>
</dbReference>
<dbReference type="GO" id="GO:0005829">
    <property type="term" value="C:cytosol"/>
    <property type="evidence" value="ECO:0007669"/>
    <property type="project" value="TreeGrafter"/>
</dbReference>
<dbReference type="GO" id="GO:0000287">
    <property type="term" value="F:magnesium ion binding"/>
    <property type="evidence" value="ECO:0007669"/>
    <property type="project" value="UniProtKB-UniRule"/>
</dbReference>
<dbReference type="GO" id="GO:0008967">
    <property type="term" value="F:phosphoglycolate phosphatase activity"/>
    <property type="evidence" value="ECO:0007669"/>
    <property type="project" value="TreeGrafter"/>
</dbReference>
<dbReference type="GO" id="GO:0050194">
    <property type="term" value="F:phosphonoacetaldehyde hydrolase activity"/>
    <property type="evidence" value="ECO:0007669"/>
    <property type="project" value="UniProtKB-UniRule"/>
</dbReference>
<dbReference type="GO" id="GO:0006281">
    <property type="term" value="P:DNA repair"/>
    <property type="evidence" value="ECO:0007669"/>
    <property type="project" value="TreeGrafter"/>
</dbReference>
<dbReference type="GO" id="GO:0019700">
    <property type="term" value="P:organic phosphonate catabolic process"/>
    <property type="evidence" value="ECO:0007669"/>
    <property type="project" value="InterPro"/>
</dbReference>
<dbReference type="FunFam" id="1.10.150.240:FF:000006">
    <property type="entry name" value="Phosphonoacetaldehyde hydrolase"/>
    <property type="match status" value="1"/>
</dbReference>
<dbReference type="Gene3D" id="3.40.50.1000">
    <property type="entry name" value="HAD superfamily/HAD-like"/>
    <property type="match status" value="1"/>
</dbReference>
<dbReference type="Gene3D" id="1.10.150.240">
    <property type="entry name" value="Putative phosphatase, domain 2"/>
    <property type="match status" value="1"/>
</dbReference>
<dbReference type="HAMAP" id="MF_01375">
    <property type="entry name" value="PhnX"/>
    <property type="match status" value="1"/>
</dbReference>
<dbReference type="InterPro" id="IPR050155">
    <property type="entry name" value="HAD-like_hydrolase_sf"/>
</dbReference>
<dbReference type="InterPro" id="IPR036412">
    <property type="entry name" value="HAD-like_sf"/>
</dbReference>
<dbReference type="InterPro" id="IPR006439">
    <property type="entry name" value="HAD-SF_hydro_IA"/>
</dbReference>
<dbReference type="InterPro" id="IPR023214">
    <property type="entry name" value="HAD_sf"/>
</dbReference>
<dbReference type="InterPro" id="IPR023198">
    <property type="entry name" value="PGP-like_dom2"/>
</dbReference>
<dbReference type="InterPro" id="IPR006323">
    <property type="entry name" value="Phosphonoacetald_hydro"/>
</dbReference>
<dbReference type="NCBIfam" id="TIGR01509">
    <property type="entry name" value="HAD-SF-IA-v3"/>
    <property type="match status" value="1"/>
</dbReference>
<dbReference type="NCBIfam" id="TIGR01422">
    <property type="entry name" value="phosphonatase"/>
    <property type="match status" value="1"/>
</dbReference>
<dbReference type="PANTHER" id="PTHR43434">
    <property type="entry name" value="PHOSPHOGLYCOLATE PHOSPHATASE"/>
    <property type="match status" value="1"/>
</dbReference>
<dbReference type="PANTHER" id="PTHR43434:SF19">
    <property type="entry name" value="PHOSPHONOACETALDEHYDE HYDROLASE"/>
    <property type="match status" value="1"/>
</dbReference>
<dbReference type="Pfam" id="PF00702">
    <property type="entry name" value="Hydrolase"/>
    <property type="match status" value="1"/>
</dbReference>
<dbReference type="SFLD" id="SFLDG01129">
    <property type="entry name" value="C1.5:_HAD__Beta-PGM__Phosphata"/>
    <property type="match status" value="1"/>
</dbReference>
<dbReference type="SFLD" id="SFLDF00038">
    <property type="entry name" value="phosphonoacetaldehyde_hydrolas"/>
    <property type="match status" value="1"/>
</dbReference>
<dbReference type="SUPFAM" id="SSF56784">
    <property type="entry name" value="HAD-like"/>
    <property type="match status" value="1"/>
</dbReference>
<sequence>MQDSPVQAVIFDWAGTIVDFGSFAPTSIFVEAFKSGFNFDINLAEAREPMGLGKWQHIEAVGKLPSVNQRWHQQFGHAMTSEEIDHIYATFMPLQKAKVADHAEPILNAIDVVNDLKDKGIKIGSCSGYPREVMDILIPAAAKYGYHPDYVVATDDLPQGGRPAAFMALKNAIELGVTNVSTCIKVDDAAPGIDEGHNAGMWTVGLLLSGNEAGLTYEEYQAADAETLSVAREKARLKLQKSTPHYLIDTIADLPEVIADIETRLLAGERP</sequence>
<accession>B6ES82</accession>
<evidence type="ECO:0000255" key="1">
    <source>
        <dbReference type="HAMAP-Rule" id="MF_01375"/>
    </source>
</evidence>
<gene>
    <name evidence="1" type="primary">phnX</name>
    <name type="ordered locus">VSAL_II0814</name>
</gene>
<organism>
    <name type="scientific">Aliivibrio salmonicida (strain LFI1238)</name>
    <name type="common">Vibrio salmonicida (strain LFI1238)</name>
    <dbReference type="NCBI Taxonomy" id="316275"/>
    <lineage>
        <taxon>Bacteria</taxon>
        <taxon>Pseudomonadati</taxon>
        <taxon>Pseudomonadota</taxon>
        <taxon>Gammaproteobacteria</taxon>
        <taxon>Vibrionales</taxon>
        <taxon>Vibrionaceae</taxon>
        <taxon>Aliivibrio</taxon>
    </lineage>
</organism>
<keyword id="KW-0378">Hydrolase</keyword>
<keyword id="KW-0460">Magnesium</keyword>
<keyword id="KW-0479">Metal-binding</keyword>
<keyword id="KW-0704">Schiff base</keyword>
<proteinExistence type="inferred from homology"/>
<feature type="chain" id="PRO_1000144825" description="Phosphonoacetaldehyde hydrolase">
    <location>
        <begin position="1"/>
        <end position="271"/>
    </location>
</feature>
<feature type="active site" description="Nucleophile" evidence="1">
    <location>
        <position position="12"/>
    </location>
</feature>
<feature type="active site" description="Schiff-base intermediate with substrate" evidence="1">
    <location>
        <position position="54"/>
    </location>
</feature>
<feature type="binding site" evidence="1">
    <location>
        <position position="12"/>
    </location>
    <ligand>
        <name>Mg(2+)</name>
        <dbReference type="ChEBI" id="CHEBI:18420"/>
    </ligand>
</feature>
<feature type="binding site" evidence="1">
    <location>
        <position position="14"/>
    </location>
    <ligand>
        <name>Mg(2+)</name>
        <dbReference type="ChEBI" id="CHEBI:18420"/>
    </ligand>
</feature>
<feature type="binding site" evidence="1">
    <location>
        <position position="188"/>
    </location>
    <ligand>
        <name>Mg(2+)</name>
        <dbReference type="ChEBI" id="CHEBI:18420"/>
    </ligand>
</feature>
<protein>
    <recommendedName>
        <fullName evidence="1">Phosphonoacetaldehyde hydrolase</fullName>
        <shortName evidence="1">Phosphonatase</shortName>
        <ecNumber evidence="1">3.11.1.1</ecNumber>
    </recommendedName>
    <alternativeName>
        <fullName evidence="1">Phosphonoacetaldehyde phosphonohydrolase</fullName>
    </alternativeName>
</protein>